<keyword id="KW-0255">Endonuclease</keyword>
<keyword id="KW-0378">Hydrolase</keyword>
<keyword id="KW-0479">Metal-binding</keyword>
<keyword id="KW-0540">Nuclease</keyword>
<keyword id="KW-0819">tRNA processing</keyword>
<keyword id="KW-0862">Zinc</keyword>
<proteinExistence type="inferred from homology"/>
<reference key="1">
    <citation type="submission" date="2008-10" db="EMBL/GenBank/DDBJ databases">
        <title>Genome sequence of Bacillus anthracis str. CDC 684.</title>
        <authorList>
            <person name="Dodson R.J."/>
            <person name="Munk A.C."/>
            <person name="Brettin T."/>
            <person name="Bruce D."/>
            <person name="Detter C."/>
            <person name="Tapia R."/>
            <person name="Han C."/>
            <person name="Sutton G."/>
            <person name="Sims D."/>
        </authorList>
    </citation>
    <scope>NUCLEOTIDE SEQUENCE [LARGE SCALE GENOMIC DNA]</scope>
    <source>
        <strain>CDC 684 / NRRL 3495</strain>
    </source>
</reference>
<comment type="function">
    <text evidence="1">Zinc phosphodiesterase, which displays some tRNA 3'-processing endonuclease activity. Probably involved in tRNA maturation, by removing a 3'-trailer from precursor tRNA.</text>
</comment>
<comment type="catalytic activity">
    <reaction evidence="1">
        <text>Endonucleolytic cleavage of RNA, removing extra 3' nucleotides from tRNA precursor, generating 3' termini of tRNAs. A 3'-hydroxy group is left at the tRNA terminus and a 5'-phosphoryl group is left at the trailer molecule.</text>
        <dbReference type="EC" id="3.1.26.11"/>
    </reaction>
</comment>
<comment type="cofactor">
    <cofactor evidence="1">
        <name>Zn(2+)</name>
        <dbReference type="ChEBI" id="CHEBI:29105"/>
    </cofactor>
    <text evidence="1">Binds 2 Zn(2+) ions.</text>
</comment>
<comment type="subunit">
    <text evidence="1">Homodimer.</text>
</comment>
<comment type="similarity">
    <text evidence="1">Belongs to the RNase Z family.</text>
</comment>
<name>RNZ_BACAC</name>
<gene>
    <name evidence="1" type="primary">rnz</name>
    <name type="ordered locus">BAMEG_4403</name>
</gene>
<organism>
    <name type="scientific">Bacillus anthracis (strain CDC 684 / NRRL 3495)</name>
    <dbReference type="NCBI Taxonomy" id="568206"/>
    <lineage>
        <taxon>Bacteria</taxon>
        <taxon>Bacillati</taxon>
        <taxon>Bacillota</taxon>
        <taxon>Bacilli</taxon>
        <taxon>Bacillales</taxon>
        <taxon>Bacillaceae</taxon>
        <taxon>Bacillus</taxon>
        <taxon>Bacillus cereus group</taxon>
    </lineage>
</organism>
<dbReference type="EC" id="3.1.26.11" evidence="1"/>
<dbReference type="EMBL" id="CP001215">
    <property type="protein sequence ID" value="ACP15136.1"/>
    <property type="molecule type" value="Genomic_DNA"/>
</dbReference>
<dbReference type="RefSeq" id="WP_000397440.1">
    <property type="nucleotide sequence ID" value="NC_012581.1"/>
</dbReference>
<dbReference type="SMR" id="C3LJR8"/>
<dbReference type="GeneID" id="45024027"/>
<dbReference type="KEGG" id="bah:BAMEG_4403"/>
<dbReference type="HOGENOM" id="CLU_031317_2_0_9"/>
<dbReference type="GO" id="GO:0042781">
    <property type="term" value="F:3'-tRNA processing endoribonuclease activity"/>
    <property type="evidence" value="ECO:0007669"/>
    <property type="project" value="UniProtKB-UniRule"/>
</dbReference>
<dbReference type="GO" id="GO:0008270">
    <property type="term" value="F:zinc ion binding"/>
    <property type="evidence" value="ECO:0007669"/>
    <property type="project" value="UniProtKB-UniRule"/>
</dbReference>
<dbReference type="CDD" id="cd07717">
    <property type="entry name" value="RNaseZ_ZiPD-like_MBL-fold"/>
    <property type="match status" value="1"/>
</dbReference>
<dbReference type="FunFam" id="3.60.15.10:FF:000002">
    <property type="entry name" value="Ribonuclease Z"/>
    <property type="match status" value="1"/>
</dbReference>
<dbReference type="Gene3D" id="3.60.15.10">
    <property type="entry name" value="Ribonuclease Z/Hydroxyacylglutathione hydrolase-like"/>
    <property type="match status" value="1"/>
</dbReference>
<dbReference type="HAMAP" id="MF_01818">
    <property type="entry name" value="RNase_Z_BN"/>
    <property type="match status" value="1"/>
</dbReference>
<dbReference type="InterPro" id="IPR001279">
    <property type="entry name" value="Metallo-B-lactamas"/>
</dbReference>
<dbReference type="InterPro" id="IPR036866">
    <property type="entry name" value="RibonucZ/Hydroxyglut_hydro"/>
</dbReference>
<dbReference type="InterPro" id="IPR013471">
    <property type="entry name" value="RNase_Z/BN"/>
</dbReference>
<dbReference type="NCBIfam" id="NF000800">
    <property type="entry name" value="PRK00055.1-1"/>
    <property type="match status" value="1"/>
</dbReference>
<dbReference type="NCBIfam" id="NF000801">
    <property type="entry name" value="PRK00055.1-3"/>
    <property type="match status" value="1"/>
</dbReference>
<dbReference type="NCBIfam" id="TIGR02651">
    <property type="entry name" value="RNase_Z"/>
    <property type="match status" value="1"/>
</dbReference>
<dbReference type="PANTHER" id="PTHR46018">
    <property type="entry name" value="ZINC PHOSPHODIESTERASE ELAC PROTEIN 1"/>
    <property type="match status" value="1"/>
</dbReference>
<dbReference type="PANTHER" id="PTHR46018:SF2">
    <property type="entry name" value="ZINC PHOSPHODIESTERASE ELAC PROTEIN 1"/>
    <property type="match status" value="1"/>
</dbReference>
<dbReference type="Pfam" id="PF00753">
    <property type="entry name" value="Lactamase_B"/>
    <property type="match status" value="1"/>
</dbReference>
<dbReference type="Pfam" id="PF12706">
    <property type="entry name" value="Lactamase_B_2"/>
    <property type="match status" value="1"/>
</dbReference>
<dbReference type="SMART" id="SM00849">
    <property type="entry name" value="Lactamase_B"/>
    <property type="match status" value="1"/>
</dbReference>
<dbReference type="SUPFAM" id="SSF56281">
    <property type="entry name" value="Metallo-hydrolase/oxidoreductase"/>
    <property type="match status" value="1"/>
</dbReference>
<sequence>MEFVFLGTGAGVPSKGRNVSAIALQLLEERGQTWLFDCGEATQHQILHTSVRPRRIEKIFITHLHGDHIFGLPGLLGSRSFQGGTTPLTVYGPKGIKQFIEVALSVSTTHVKYPLEIVEITEEGTVFEDNEFHVETKRLSHGIECFGYRIIEKDIQGALLVDKLLEIGVKPGPLFKRLKDGEVVELENGTILNGNDFIGPPQKGRVITILGDTRYCEASRELAQDADVLVHEATFAAEDEQQAYDYFHSTSKQAASIALQANAKRLILTHISSRYQGDTYKELLKEARELFSNTEIATDLKSFPVDR</sequence>
<feature type="chain" id="PRO_1000187929" description="Ribonuclease Z">
    <location>
        <begin position="1"/>
        <end position="307"/>
    </location>
</feature>
<feature type="active site" description="Proton acceptor" evidence="1">
    <location>
        <position position="67"/>
    </location>
</feature>
<feature type="binding site" evidence="1">
    <location>
        <position position="63"/>
    </location>
    <ligand>
        <name>Zn(2+)</name>
        <dbReference type="ChEBI" id="CHEBI:29105"/>
        <label>1</label>
        <note>catalytic</note>
    </ligand>
</feature>
<feature type="binding site" evidence="1">
    <location>
        <position position="65"/>
    </location>
    <ligand>
        <name>Zn(2+)</name>
        <dbReference type="ChEBI" id="CHEBI:29105"/>
        <label>1</label>
        <note>catalytic</note>
    </ligand>
</feature>
<feature type="binding site" evidence="1">
    <location>
        <position position="67"/>
    </location>
    <ligand>
        <name>Zn(2+)</name>
        <dbReference type="ChEBI" id="CHEBI:29105"/>
        <label>2</label>
        <note>catalytic</note>
    </ligand>
</feature>
<feature type="binding site" evidence="1">
    <location>
        <position position="68"/>
    </location>
    <ligand>
        <name>Zn(2+)</name>
        <dbReference type="ChEBI" id="CHEBI:29105"/>
        <label>2</label>
        <note>catalytic</note>
    </ligand>
</feature>
<feature type="binding site" evidence="1">
    <location>
        <position position="141"/>
    </location>
    <ligand>
        <name>Zn(2+)</name>
        <dbReference type="ChEBI" id="CHEBI:29105"/>
        <label>1</label>
        <note>catalytic</note>
    </ligand>
</feature>
<feature type="binding site" evidence="1">
    <location>
        <position position="212"/>
    </location>
    <ligand>
        <name>Zn(2+)</name>
        <dbReference type="ChEBI" id="CHEBI:29105"/>
        <label>1</label>
        <note>catalytic</note>
    </ligand>
</feature>
<feature type="binding site" evidence="1">
    <location>
        <position position="212"/>
    </location>
    <ligand>
        <name>Zn(2+)</name>
        <dbReference type="ChEBI" id="CHEBI:29105"/>
        <label>2</label>
        <note>catalytic</note>
    </ligand>
</feature>
<feature type="binding site" evidence="1">
    <location>
        <position position="270"/>
    </location>
    <ligand>
        <name>Zn(2+)</name>
        <dbReference type="ChEBI" id="CHEBI:29105"/>
        <label>2</label>
        <note>catalytic</note>
    </ligand>
</feature>
<evidence type="ECO:0000255" key="1">
    <source>
        <dbReference type="HAMAP-Rule" id="MF_01818"/>
    </source>
</evidence>
<accession>C3LJR8</accession>
<protein>
    <recommendedName>
        <fullName evidence="1">Ribonuclease Z</fullName>
        <shortName evidence="1">RNase Z</shortName>
        <ecNumber evidence="1">3.1.26.11</ecNumber>
    </recommendedName>
    <alternativeName>
        <fullName evidence="1">tRNA 3 endonuclease</fullName>
    </alternativeName>
    <alternativeName>
        <fullName evidence="1">tRNase Z</fullName>
    </alternativeName>
</protein>